<accession>B6ELP3</accession>
<dbReference type="EC" id="2.7.7.4" evidence="2"/>
<dbReference type="EMBL" id="FM178379">
    <property type="protein sequence ID" value="CAQ78106.1"/>
    <property type="molecule type" value="Genomic_DNA"/>
</dbReference>
<dbReference type="RefSeq" id="WP_012549246.1">
    <property type="nucleotide sequence ID" value="NC_011312.1"/>
</dbReference>
<dbReference type="SMR" id="B6ELP3"/>
<dbReference type="KEGG" id="vsa:VSAL_I0421"/>
<dbReference type="eggNOG" id="COG2895">
    <property type="taxonomic scope" value="Bacteria"/>
</dbReference>
<dbReference type="HOGENOM" id="CLU_007265_5_2_6"/>
<dbReference type="UniPathway" id="UPA00140">
    <property type="reaction ID" value="UER00204"/>
</dbReference>
<dbReference type="Proteomes" id="UP000001730">
    <property type="component" value="Chromosome 1"/>
</dbReference>
<dbReference type="GO" id="GO:0005524">
    <property type="term" value="F:ATP binding"/>
    <property type="evidence" value="ECO:0007669"/>
    <property type="project" value="UniProtKB-KW"/>
</dbReference>
<dbReference type="GO" id="GO:0005525">
    <property type="term" value="F:GTP binding"/>
    <property type="evidence" value="ECO:0007669"/>
    <property type="project" value="UniProtKB-UniRule"/>
</dbReference>
<dbReference type="GO" id="GO:0003924">
    <property type="term" value="F:GTPase activity"/>
    <property type="evidence" value="ECO:0007669"/>
    <property type="project" value="InterPro"/>
</dbReference>
<dbReference type="GO" id="GO:0097216">
    <property type="term" value="F:guanosine tetraphosphate binding"/>
    <property type="evidence" value="ECO:0007669"/>
    <property type="project" value="UniProtKB-ARBA"/>
</dbReference>
<dbReference type="GO" id="GO:0004781">
    <property type="term" value="F:sulfate adenylyltransferase (ATP) activity"/>
    <property type="evidence" value="ECO:0007669"/>
    <property type="project" value="UniProtKB-UniRule"/>
</dbReference>
<dbReference type="GO" id="GO:0070814">
    <property type="term" value="P:hydrogen sulfide biosynthetic process"/>
    <property type="evidence" value="ECO:0007669"/>
    <property type="project" value="UniProtKB-UniRule"/>
</dbReference>
<dbReference type="GO" id="GO:0000103">
    <property type="term" value="P:sulfate assimilation"/>
    <property type="evidence" value="ECO:0007669"/>
    <property type="project" value="UniProtKB-UniRule"/>
</dbReference>
<dbReference type="CDD" id="cd04166">
    <property type="entry name" value="CysN_ATPS"/>
    <property type="match status" value="1"/>
</dbReference>
<dbReference type="CDD" id="cd03695">
    <property type="entry name" value="CysN_NodQ_II"/>
    <property type="match status" value="1"/>
</dbReference>
<dbReference type="CDD" id="cd04095">
    <property type="entry name" value="CysN_NoDQ_III"/>
    <property type="match status" value="1"/>
</dbReference>
<dbReference type="FunFam" id="2.40.30.10:FF:000027">
    <property type="entry name" value="Sulfate adenylyltransferase subunit 1"/>
    <property type="match status" value="1"/>
</dbReference>
<dbReference type="FunFam" id="2.40.30.10:FF:000031">
    <property type="entry name" value="Sulfate adenylyltransferase subunit 1"/>
    <property type="match status" value="1"/>
</dbReference>
<dbReference type="FunFam" id="3.40.50.300:FF:000119">
    <property type="entry name" value="Sulfate adenylyltransferase subunit 1"/>
    <property type="match status" value="1"/>
</dbReference>
<dbReference type="Gene3D" id="3.40.50.300">
    <property type="entry name" value="P-loop containing nucleotide triphosphate hydrolases"/>
    <property type="match status" value="1"/>
</dbReference>
<dbReference type="Gene3D" id="2.40.30.10">
    <property type="entry name" value="Translation factors"/>
    <property type="match status" value="2"/>
</dbReference>
<dbReference type="HAMAP" id="MF_00062">
    <property type="entry name" value="Sulf_adenylyltr_sub1"/>
    <property type="match status" value="1"/>
</dbReference>
<dbReference type="InterPro" id="IPR041757">
    <property type="entry name" value="CysN_GTP-bd"/>
</dbReference>
<dbReference type="InterPro" id="IPR044138">
    <property type="entry name" value="CysN_II"/>
</dbReference>
<dbReference type="InterPro" id="IPR044139">
    <property type="entry name" value="CysN_NoDQ_III"/>
</dbReference>
<dbReference type="InterPro" id="IPR004161">
    <property type="entry name" value="EFTu-like_2"/>
</dbReference>
<dbReference type="InterPro" id="IPR031157">
    <property type="entry name" value="G_TR_CS"/>
</dbReference>
<dbReference type="InterPro" id="IPR054696">
    <property type="entry name" value="GTP-eEF1A_C"/>
</dbReference>
<dbReference type="InterPro" id="IPR027417">
    <property type="entry name" value="P-loop_NTPase"/>
</dbReference>
<dbReference type="InterPro" id="IPR005225">
    <property type="entry name" value="Small_GTP-bd"/>
</dbReference>
<dbReference type="InterPro" id="IPR011779">
    <property type="entry name" value="SO4_adenylTrfase_lsu"/>
</dbReference>
<dbReference type="InterPro" id="IPR000795">
    <property type="entry name" value="T_Tr_GTP-bd_dom"/>
</dbReference>
<dbReference type="InterPro" id="IPR050100">
    <property type="entry name" value="TRAFAC_GTPase_members"/>
</dbReference>
<dbReference type="InterPro" id="IPR009000">
    <property type="entry name" value="Transl_B-barrel_sf"/>
</dbReference>
<dbReference type="InterPro" id="IPR009001">
    <property type="entry name" value="Transl_elong_EF1A/Init_IF2_C"/>
</dbReference>
<dbReference type="NCBIfam" id="TIGR02034">
    <property type="entry name" value="CysN"/>
    <property type="match status" value="1"/>
</dbReference>
<dbReference type="NCBIfam" id="NF003478">
    <property type="entry name" value="PRK05124.1"/>
    <property type="match status" value="1"/>
</dbReference>
<dbReference type="NCBIfam" id="TIGR00231">
    <property type="entry name" value="small_GTP"/>
    <property type="match status" value="1"/>
</dbReference>
<dbReference type="PANTHER" id="PTHR23115">
    <property type="entry name" value="TRANSLATION FACTOR"/>
    <property type="match status" value="1"/>
</dbReference>
<dbReference type="Pfam" id="PF22594">
    <property type="entry name" value="GTP-eEF1A_C"/>
    <property type="match status" value="1"/>
</dbReference>
<dbReference type="Pfam" id="PF00009">
    <property type="entry name" value="GTP_EFTU"/>
    <property type="match status" value="1"/>
</dbReference>
<dbReference type="Pfam" id="PF03144">
    <property type="entry name" value="GTP_EFTU_D2"/>
    <property type="match status" value="1"/>
</dbReference>
<dbReference type="PRINTS" id="PR00315">
    <property type="entry name" value="ELONGATNFCT"/>
</dbReference>
<dbReference type="SUPFAM" id="SSF50465">
    <property type="entry name" value="EF-Tu/eEF-1alpha/eIF2-gamma C-terminal domain"/>
    <property type="match status" value="1"/>
</dbReference>
<dbReference type="SUPFAM" id="SSF52540">
    <property type="entry name" value="P-loop containing nucleoside triphosphate hydrolases"/>
    <property type="match status" value="1"/>
</dbReference>
<dbReference type="SUPFAM" id="SSF50447">
    <property type="entry name" value="Translation proteins"/>
    <property type="match status" value="1"/>
</dbReference>
<dbReference type="PROSITE" id="PS00301">
    <property type="entry name" value="G_TR_1"/>
    <property type="match status" value="1"/>
</dbReference>
<dbReference type="PROSITE" id="PS51722">
    <property type="entry name" value="G_TR_2"/>
    <property type="match status" value="1"/>
</dbReference>
<comment type="function">
    <text evidence="2">With CysD forms the ATP sulfurylase (ATPS) that catalyzes the adenylation of sulfate producing adenosine 5'-phosphosulfate (APS) and diphosphate, the first enzymatic step in sulfur assimilation pathway. APS synthesis involves the formation of a high-energy phosphoric-sulfuric acid anhydride bond driven by GTP hydrolysis by CysN coupled to ATP hydrolysis by CysD.</text>
</comment>
<comment type="catalytic activity">
    <reaction evidence="2">
        <text>sulfate + ATP + H(+) = adenosine 5'-phosphosulfate + diphosphate</text>
        <dbReference type="Rhea" id="RHEA:18133"/>
        <dbReference type="ChEBI" id="CHEBI:15378"/>
        <dbReference type="ChEBI" id="CHEBI:16189"/>
        <dbReference type="ChEBI" id="CHEBI:30616"/>
        <dbReference type="ChEBI" id="CHEBI:33019"/>
        <dbReference type="ChEBI" id="CHEBI:58243"/>
        <dbReference type="EC" id="2.7.7.4"/>
    </reaction>
</comment>
<comment type="pathway">
    <text evidence="2">Sulfur metabolism; hydrogen sulfide biosynthesis; sulfite from sulfate: step 1/3.</text>
</comment>
<comment type="subunit">
    <text evidence="2">Heterodimer composed of CysD, the smaller subunit, and CysN.</text>
</comment>
<comment type="similarity">
    <text evidence="2">Belongs to the TRAFAC class translation factor GTPase superfamily. Classic translation factor GTPase family. CysN/NodQ subfamily.</text>
</comment>
<name>CYSN_ALISL</name>
<protein>
    <recommendedName>
        <fullName evidence="2">Sulfate adenylyltransferase subunit 1</fullName>
        <ecNumber evidence="2">2.7.7.4</ecNumber>
    </recommendedName>
    <alternativeName>
        <fullName evidence="2">ATP-sulfurylase large subunit</fullName>
    </alternativeName>
    <alternativeName>
        <fullName evidence="2">Sulfate adenylate transferase</fullName>
        <shortName evidence="2">SAT</shortName>
    </alternativeName>
</protein>
<organism>
    <name type="scientific">Aliivibrio salmonicida (strain LFI1238)</name>
    <name type="common">Vibrio salmonicida (strain LFI1238)</name>
    <dbReference type="NCBI Taxonomy" id="316275"/>
    <lineage>
        <taxon>Bacteria</taxon>
        <taxon>Pseudomonadati</taxon>
        <taxon>Pseudomonadota</taxon>
        <taxon>Gammaproteobacteria</taxon>
        <taxon>Vibrionales</taxon>
        <taxon>Vibrionaceae</taxon>
        <taxon>Aliivibrio</taxon>
    </lineage>
</organism>
<feature type="chain" id="PRO_1000092130" description="Sulfate adenylyltransferase subunit 1">
    <location>
        <begin position="1"/>
        <end position="478"/>
    </location>
</feature>
<feature type="domain" description="tr-type G">
    <location>
        <begin position="24"/>
        <end position="240"/>
    </location>
</feature>
<feature type="region of interest" description="G1" evidence="1">
    <location>
        <begin position="33"/>
        <end position="40"/>
    </location>
</feature>
<feature type="region of interest" description="G2" evidence="1">
    <location>
        <begin position="91"/>
        <end position="95"/>
    </location>
</feature>
<feature type="region of interest" description="G3" evidence="1">
    <location>
        <begin position="112"/>
        <end position="115"/>
    </location>
</feature>
<feature type="region of interest" description="G4" evidence="1">
    <location>
        <begin position="167"/>
        <end position="170"/>
    </location>
</feature>
<feature type="region of interest" description="G5" evidence="1">
    <location>
        <begin position="206"/>
        <end position="208"/>
    </location>
</feature>
<feature type="binding site" evidence="2">
    <location>
        <begin position="33"/>
        <end position="40"/>
    </location>
    <ligand>
        <name>GTP</name>
        <dbReference type="ChEBI" id="CHEBI:37565"/>
    </ligand>
</feature>
<feature type="binding site" evidence="2">
    <location>
        <begin position="112"/>
        <end position="116"/>
    </location>
    <ligand>
        <name>GTP</name>
        <dbReference type="ChEBI" id="CHEBI:37565"/>
    </ligand>
</feature>
<feature type="binding site" evidence="2">
    <location>
        <begin position="167"/>
        <end position="170"/>
    </location>
    <ligand>
        <name>GTP</name>
        <dbReference type="ChEBI" id="CHEBI:37565"/>
    </ligand>
</feature>
<proteinExistence type="inferred from homology"/>
<keyword id="KW-0067">ATP-binding</keyword>
<keyword id="KW-0342">GTP-binding</keyword>
<keyword id="KW-0547">Nucleotide-binding</keyword>
<keyword id="KW-0548">Nucleotidyltransferase</keyword>
<keyword id="KW-0808">Transferase</keyword>
<evidence type="ECO:0000250" key="1"/>
<evidence type="ECO:0000255" key="2">
    <source>
        <dbReference type="HAMAP-Rule" id="MF_00062"/>
    </source>
</evidence>
<sequence>MNSAVEQELAELGIEAYLSQHQHKSMLRFLTCGSVDDGKSTLIGRLLHDSKQIYADQLEAVHADSQRVGTTGERPDLALLVDGLQAEREQGITIDVAYRYFSTQKRKFIISDTPGHEQYTRNMATGASTCDVAVILIDARKGVLDQTRRHSYIANLLGIRHFVVAVNKMDLVDYSQSRFEEIKEEYVTFSKKLNNPNLDISILPLSALEGDNVVNHSAALAWYKGAPLLEVLEDIDIDADRGNGEFRFPVQYVNRPNLDFRGFSGSVSSGEIKVGDDIIALPSGKKSKVARIVTFDGDLPSAQAGQAVTLTLEDEIDISRGDLLVKSTSNLTATDQFKAEIVWMTEKGLQPGRQYDIKIAGKKTVGQIDAIHHQVNINSLETFVTDELPLNGIGLCDVSLTEVVSLDRYQDCADTGGFIFIDRLTNVTVGAGMIQNLSELSDVAPINDNVSAFEVELNALVRKHFPHWGAQDISKLLS</sequence>
<gene>
    <name evidence="2" type="primary">cysN</name>
    <name type="ordered locus">VSAL_I0421</name>
</gene>
<reference key="1">
    <citation type="journal article" date="2008" name="BMC Genomics">
        <title>The genome sequence of the fish pathogen Aliivibrio salmonicida strain LFI1238 shows extensive evidence of gene decay.</title>
        <authorList>
            <person name="Hjerde E."/>
            <person name="Lorentzen M.S."/>
            <person name="Holden M.T."/>
            <person name="Seeger K."/>
            <person name="Paulsen S."/>
            <person name="Bason N."/>
            <person name="Churcher C."/>
            <person name="Harris D."/>
            <person name="Norbertczak H."/>
            <person name="Quail M.A."/>
            <person name="Sanders S."/>
            <person name="Thurston S."/>
            <person name="Parkhill J."/>
            <person name="Willassen N.P."/>
            <person name="Thomson N.R."/>
        </authorList>
    </citation>
    <scope>NUCLEOTIDE SEQUENCE [LARGE SCALE GENOMIC DNA]</scope>
    <source>
        <strain>LFI1238</strain>
    </source>
</reference>